<evidence type="ECO:0000255" key="1">
    <source>
        <dbReference type="HAMAP-Rule" id="MF_01309"/>
    </source>
</evidence>
<evidence type="ECO:0000256" key="2">
    <source>
        <dbReference type="SAM" id="MobiDB-lite"/>
    </source>
</evidence>
<evidence type="ECO:0000305" key="3"/>
<feature type="chain" id="PRO_0000230742" description="Small ribosomal subunit protein uS3">
    <location>
        <begin position="1"/>
        <end position="244"/>
    </location>
</feature>
<feature type="domain" description="KH type-2" evidence="1">
    <location>
        <begin position="39"/>
        <end position="107"/>
    </location>
</feature>
<feature type="region of interest" description="Disordered" evidence="2">
    <location>
        <begin position="213"/>
        <end position="244"/>
    </location>
</feature>
<feature type="compositionally biased region" description="Basic and acidic residues" evidence="2">
    <location>
        <begin position="216"/>
        <end position="244"/>
    </location>
</feature>
<accession>Q4URE5</accession>
<reference key="1">
    <citation type="journal article" date="2005" name="Genome Res.">
        <title>Comparative and functional genomic analyses of the pathogenicity of phytopathogen Xanthomonas campestris pv. campestris.</title>
        <authorList>
            <person name="Qian W."/>
            <person name="Jia Y."/>
            <person name="Ren S.-X."/>
            <person name="He Y.-Q."/>
            <person name="Feng J.-X."/>
            <person name="Lu L.-F."/>
            <person name="Sun Q."/>
            <person name="Ying G."/>
            <person name="Tang D.-J."/>
            <person name="Tang H."/>
            <person name="Wu W."/>
            <person name="Hao P."/>
            <person name="Wang L."/>
            <person name="Jiang B.-L."/>
            <person name="Zeng S."/>
            <person name="Gu W.-Y."/>
            <person name="Lu G."/>
            <person name="Rong L."/>
            <person name="Tian Y."/>
            <person name="Yao Z."/>
            <person name="Fu G."/>
            <person name="Chen B."/>
            <person name="Fang R."/>
            <person name="Qiang B."/>
            <person name="Chen Z."/>
            <person name="Zhao G.-P."/>
            <person name="Tang J.-L."/>
            <person name="He C."/>
        </authorList>
    </citation>
    <scope>NUCLEOTIDE SEQUENCE [LARGE SCALE GENOMIC DNA]</scope>
    <source>
        <strain>8004</strain>
    </source>
</reference>
<organism>
    <name type="scientific">Xanthomonas campestris pv. campestris (strain 8004)</name>
    <dbReference type="NCBI Taxonomy" id="314565"/>
    <lineage>
        <taxon>Bacteria</taxon>
        <taxon>Pseudomonadati</taxon>
        <taxon>Pseudomonadota</taxon>
        <taxon>Gammaproteobacteria</taxon>
        <taxon>Lysobacterales</taxon>
        <taxon>Lysobacteraceae</taxon>
        <taxon>Xanthomonas</taxon>
    </lineage>
</organism>
<sequence>MGHKVHPTGIRLGIAKDWNSKWYASKADFAAYLAADLKVREMLRKKLAQAGISKILIERPAKTARVTIHTARPGVVIGKRGEDIEKLRKEVSEMMGVPAHINVTEVRKPELDAQLVAESIAQQLERRIMFRRAMKRSVGNAMRLGALGIKVNVAGRLNGAEIARSEWYREGRVPLHTLRADIDYGFAEASTTYGIIGIKVWIYKGEVFDFSQVGQEKQDDSPRNDRNDRGDRGDRPSRPAREAR</sequence>
<dbReference type="EMBL" id="CP000050">
    <property type="protein sequence ID" value="AAY50378.1"/>
    <property type="molecule type" value="Genomic_DNA"/>
</dbReference>
<dbReference type="RefSeq" id="WP_011036126.1">
    <property type="nucleotide sequence ID" value="NZ_CP155948.1"/>
</dbReference>
<dbReference type="SMR" id="Q4URE5"/>
<dbReference type="GeneID" id="58014523"/>
<dbReference type="KEGG" id="xcb:XC_3334"/>
<dbReference type="HOGENOM" id="CLU_058591_0_2_6"/>
<dbReference type="Proteomes" id="UP000000420">
    <property type="component" value="Chromosome"/>
</dbReference>
<dbReference type="GO" id="GO:0022627">
    <property type="term" value="C:cytosolic small ribosomal subunit"/>
    <property type="evidence" value="ECO:0007669"/>
    <property type="project" value="TreeGrafter"/>
</dbReference>
<dbReference type="GO" id="GO:0003729">
    <property type="term" value="F:mRNA binding"/>
    <property type="evidence" value="ECO:0007669"/>
    <property type="project" value="UniProtKB-UniRule"/>
</dbReference>
<dbReference type="GO" id="GO:0019843">
    <property type="term" value="F:rRNA binding"/>
    <property type="evidence" value="ECO:0007669"/>
    <property type="project" value="UniProtKB-UniRule"/>
</dbReference>
<dbReference type="GO" id="GO:0003735">
    <property type="term" value="F:structural constituent of ribosome"/>
    <property type="evidence" value="ECO:0007669"/>
    <property type="project" value="InterPro"/>
</dbReference>
<dbReference type="GO" id="GO:0006412">
    <property type="term" value="P:translation"/>
    <property type="evidence" value="ECO:0007669"/>
    <property type="project" value="UniProtKB-UniRule"/>
</dbReference>
<dbReference type="CDD" id="cd02412">
    <property type="entry name" value="KH-II_30S_S3"/>
    <property type="match status" value="1"/>
</dbReference>
<dbReference type="FunFam" id="3.30.1140.32:FF:000001">
    <property type="entry name" value="30S ribosomal protein S3"/>
    <property type="match status" value="1"/>
</dbReference>
<dbReference type="FunFam" id="3.30.300.20:FF:000001">
    <property type="entry name" value="30S ribosomal protein S3"/>
    <property type="match status" value="1"/>
</dbReference>
<dbReference type="Gene3D" id="3.30.300.20">
    <property type="match status" value="1"/>
</dbReference>
<dbReference type="Gene3D" id="3.30.1140.32">
    <property type="entry name" value="Ribosomal protein S3, C-terminal domain"/>
    <property type="match status" value="1"/>
</dbReference>
<dbReference type="HAMAP" id="MF_01309_B">
    <property type="entry name" value="Ribosomal_uS3_B"/>
    <property type="match status" value="1"/>
</dbReference>
<dbReference type="InterPro" id="IPR004087">
    <property type="entry name" value="KH_dom"/>
</dbReference>
<dbReference type="InterPro" id="IPR015946">
    <property type="entry name" value="KH_dom-like_a/b"/>
</dbReference>
<dbReference type="InterPro" id="IPR004044">
    <property type="entry name" value="KH_dom_type_2"/>
</dbReference>
<dbReference type="InterPro" id="IPR009019">
    <property type="entry name" value="KH_sf_prok-type"/>
</dbReference>
<dbReference type="InterPro" id="IPR036419">
    <property type="entry name" value="Ribosomal_S3_C_sf"/>
</dbReference>
<dbReference type="InterPro" id="IPR005704">
    <property type="entry name" value="Ribosomal_uS3_bac-typ"/>
</dbReference>
<dbReference type="InterPro" id="IPR001351">
    <property type="entry name" value="Ribosomal_uS3_C"/>
</dbReference>
<dbReference type="InterPro" id="IPR018280">
    <property type="entry name" value="Ribosomal_uS3_CS"/>
</dbReference>
<dbReference type="NCBIfam" id="TIGR01009">
    <property type="entry name" value="rpsC_bact"/>
    <property type="match status" value="1"/>
</dbReference>
<dbReference type="PANTHER" id="PTHR11760">
    <property type="entry name" value="30S/40S RIBOSOMAL PROTEIN S3"/>
    <property type="match status" value="1"/>
</dbReference>
<dbReference type="PANTHER" id="PTHR11760:SF19">
    <property type="entry name" value="SMALL RIBOSOMAL SUBUNIT PROTEIN US3C"/>
    <property type="match status" value="1"/>
</dbReference>
<dbReference type="Pfam" id="PF07650">
    <property type="entry name" value="KH_2"/>
    <property type="match status" value="1"/>
</dbReference>
<dbReference type="Pfam" id="PF00189">
    <property type="entry name" value="Ribosomal_S3_C"/>
    <property type="match status" value="1"/>
</dbReference>
<dbReference type="SMART" id="SM00322">
    <property type="entry name" value="KH"/>
    <property type="match status" value="1"/>
</dbReference>
<dbReference type="SUPFAM" id="SSF54814">
    <property type="entry name" value="Prokaryotic type KH domain (KH-domain type II)"/>
    <property type="match status" value="1"/>
</dbReference>
<dbReference type="SUPFAM" id="SSF54821">
    <property type="entry name" value="Ribosomal protein S3 C-terminal domain"/>
    <property type="match status" value="1"/>
</dbReference>
<dbReference type="PROSITE" id="PS50823">
    <property type="entry name" value="KH_TYPE_2"/>
    <property type="match status" value="1"/>
</dbReference>
<dbReference type="PROSITE" id="PS00548">
    <property type="entry name" value="RIBOSOMAL_S3"/>
    <property type="match status" value="1"/>
</dbReference>
<keyword id="KW-0687">Ribonucleoprotein</keyword>
<keyword id="KW-0689">Ribosomal protein</keyword>
<keyword id="KW-0694">RNA-binding</keyword>
<keyword id="KW-0699">rRNA-binding</keyword>
<protein>
    <recommendedName>
        <fullName evidence="1">Small ribosomal subunit protein uS3</fullName>
    </recommendedName>
    <alternativeName>
        <fullName evidence="3">30S ribosomal protein S3</fullName>
    </alternativeName>
</protein>
<comment type="function">
    <text evidence="1">Binds the lower part of the 30S subunit head. Binds mRNA in the 70S ribosome, positioning it for translation.</text>
</comment>
<comment type="subunit">
    <text evidence="1">Part of the 30S ribosomal subunit. Forms a tight complex with proteins S10 and S14.</text>
</comment>
<comment type="similarity">
    <text evidence="1">Belongs to the universal ribosomal protein uS3 family.</text>
</comment>
<name>RS3_XANC8</name>
<gene>
    <name evidence="1" type="primary">rpsC</name>
    <name type="ordered locus">XC_3334</name>
</gene>
<proteinExistence type="inferred from homology"/>